<name>CATA_CAVPO</name>
<dbReference type="EC" id="1.11.1.6" evidence="3"/>
<dbReference type="EMBL" id="AJ005111">
    <property type="protein sequence ID" value="CAB57222.1"/>
    <property type="molecule type" value="mRNA"/>
</dbReference>
<dbReference type="EMBL" id="U39841">
    <property type="protein sequence ID" value="AAC52717.1"/>
    <property type="molecule type" value="mRNA"/>
</dbReference>
<dbReference type="RefSeq" id="NP_001166396.1">
    <property type="nucleotide sequence ID" value="NM_001172925.1"/>
</dbReference>
<dbReference type="SMR" id="Q64405"/>
<dbReference type="FunCoup" id="Q64405">
    <property type="interactions" value="2036"/>
</dbReference>
<dbReference type="STRING" id="10141.ENSCPOP00000011320"/>
<dbReference type="GeneID" id="100135492"/>
<dbReference type="KEGG" id="cpoc:100135492"/>
<dbReference type="CTD" id="847"/>
<dbReference type="eggNOG" id="KOG0047">
    <property type="taxonomic scope" value="Eukaryota"/>
</dbReference>
<dbReference type="InParanoid" id="Q64405"/>
<dbReference type="OrthoDB" id="6880011at2759"/>
<dbReference type="Proteomes" id="UP000005447">
    <property type="component" value="Unassembled WGS sequence"/>
</dbReference>
<dbReference type="GO" id="GO:0005739">
    <property type="term" value="C:mitochondrion"/>
    <property type="evidence" value="ECO:0007669"/>
    <property type="project" value="TreeGrafter"/>
</dbReference>
<dbReference type="GO" id="GO:0005782">
    <property type="term" value="C:peroxisomal matrix"/>
    <property type="evidence" value="ECO:0007669"/>
    <property type="project" value="UniProtKB-SubCell"/>
</dbReference>
<dbReference type="GO" id="GO:0005778">
    <property type="term" value="C:peroxisomal membrane"/>
    <property type="evidence" value="ECO:0000314"/>
    <property type="project" value="UniProtKB"/>
</dbReference>
<dbReference type="GO" id="GO:0004096">
    <property type="term" value="F:catalase activity"/>
    <property type="evidence" value="ECO:0007669"/>
    <property type="project" value="UniProtKB-EC"/>
</dbReference>
<dbReference type="GO" id="GO:0020037">
    <property type="term" value="F:heme binding"/>
    <property type="evidence" value="ECO:0007669"/>
    <property type="project" value="InterPro"/>
</dbReference>
<dbReference type="GO" id="GO:0046872">
    <property type="term" value="F:metal ion binding"/>
    <property type="evidence" value="ECO:0007669"/>
    <property type="project" value="UniProtKB-KW"/>
</dbReference>
<dbReference type="GO" id="GO:0019166">
    <property type="term" value="F:trans-2-enoyl-CoA reductase (NADPH) activity"/>
    <property type="evidence" value="ECO:0000314"/>
    <property type="project" value="UniProtKB"/>
</dbReference>
<dbReference type="GO" id="GO:0042744">
    <property type="term" value="P:hydrogen peroxide catabolic process"/>
    <property type="evidence" value="ECO:0007669"/>
    <property type="project" value="UniProtKB-KW"/>
</dbReference>
<dbReference type="GO" id="GO:0051781">
    <property type="term" value="P:positive regulation of cell division"/>
    <property type="evidence" value="ECO:0007669"/>
    <property type="project" value="UniProtKB-KW"/>
</dbReference>
<dbReference type="GO" id="GO:0042542">
    <property type="term" value="P:response to hydrogen peroxide"/>
    <property type="evidence" value="ECO:0007669"/>
    <property type="project" value="TreeGrafter"/>
</dbReference>
<dbReference type="CDD" id="cd08156">
    <property type="entry name" value="catalase_clade_3"/>
    <property type="match status" value="1"/>
</dbReference>
<dbReference type="FunFam" id="2.40.180.10:FF:000001">
    <property type="entry name" value="Catalase"/>
    <property type="match status" value="1"/>
</dbReference>
<dbReference type="Gene3D" id="2.40.180.10">
    <property type="entry name" value="Catalase core domain"/>
    <property type="match status" value="1"/>
</dbReference>
<dbReference type="InterPro" id="IPR018028">
    <property type="entry name" value="Catalase"/>
</dbReference>
<dbReference type="InterPro" id="IPR040333">
    <property type="entry name" value="Catalase_3"/>
</dbReference>
<dbReference type="InterPro" id="IPR024708">
    <property type="entry name" value="Catalase_AS"/>
</dbReference>
<dbReference type="InterPro" id="IPR024711">
    <property type="entry name" value="Catalase_clade1/3"/>
</dbReference>
<dbReference type="InterPro" id="IPR011614">
    <property type="entry name" value="Catalase_core"/>
</dbReference>
<dbReference type="InterPro" id="IPR002226">
    <property type="entry name" value="Catalase_haem_BS"/>
</dbReference>
<dbReference type="InterPro" id="IPR010582">
    <property type="entry name" value="Catalase_immune_responsive"/>
</dbReference>
<dbReference type="InterPro" id="IPR020835">
    <property type="entry name" value="Catalase_sf"/>
</dbReference>
<dbReference type="PANTHER" id="PTHR11465">
    <property type="entry name" value="CATALASE"/>
    <property type="match status" value="1"/>
</dbReference>
<dbReference type="PANTHER" id="PTHR11465:SF9">
    <property type="entry name" value="CATALASE"/>
    <property type="match status" value="1"/>
</dbReference>
<dbReference type="Pfam" id="PF00199">
    <property type="entry name" value="Catalase"/>
    <property type="match status" value="1"/>
</dbReference>
<dbReference type="Pfam" id="PF06628">
    <property type="entry name" value="Catalase-rel"/>
    <property type="match status" value="1"/>
</dbReference>
<dbReference type="PIRSF" id="PIRSF038928">
    <property type="entry name" value="Catalase_clade1-3"/>
    <property type="match status" value="1"/>
</dbReference>
<dbReference type="PRINTS" id="PR00067">
    <property type="entry name" value="CATALASE"/>
</dbReference>
<dbReference type="SMART" id="SM01060">
    <property type="entry name" value="Catalase"/>
    <property type="match status" value="1"/>
</dbReference>
<dbReference type="SUPFAM" id="SSF56634">
    <property type="entry name" value="Heme-dependent catalase-like"/>
    <property type="match status" value="1"/>
</dbReference>
<dbReference type="PROSITE" id="PS00437">
    <property type="entry name" value="CATALASE_1"/>
    <property type="match status" value="1"/>
</dbReference>
<dbReference type="PROSITE" id="PS00438">
    <property type="entry name" value="CATALASE_2"/>
    <property type="match status" value="1"/>
</dbReference>
<dbReference type="PROSITE" id="PS51402">
    <property type="entry name" value="CATALASE_3"/>
    <property type="match status" value="1"/>
</dbReference>
<organism>
    <name type="scientific">Cavia porcellus</name>
    <name type="common">Guinea pig</name>
    <dbReference type="NCBI Taxonomy" id="10141"/>
    <lineage>
        <taxon>Eukaryota</taxon>
        <taxon>Metazoa</taxon>
        <taxon>Chordata</taxon>
        <taxon>Craniata</taxon>
        <taxon>Vertebrata</taxon>
        <taxon>Euteleostomi</taxon>
        <taxon>Mammalia</taxon>
        <taxon>Eutheria</taxon>
        <taxon>Euarchontoglires</taxon>
        <taxon>Glires</taxon>
        <taxon>Rodentia</taxon>
        <taxon>Hystricomorpha</taxon>
        <taxon>Caviidae</taxon>
        <taxon>Cavia</taxon>
    </lineage>
</organism>
<sequence>MADSRDPASDQMKHWKEERAAQKPDVLTTAGGNPVGDKLNIMTVGPRGPLLVQDVVFTDEMAHFDRERIPERVVHAKGAGAFAYFEVTHDITKYCKAKVFEHIGKKTPIAVRFSTVAGESGSADTVRDPRGFAVKFYTEEGIWDLVGNNTPIFFIRDALLFPSFIHSQKRNPQTHLKDPDMMWDFWSLRPESLHQVSFLFSDRGIPDGHRHMNGYGSHTFKLVNGSGEAVYCKFHYKTDQGIKNLSVEDAARLSQEDPDYGLRDLFNAIATGNYPSWTLYIQVMTFQQAQSFPFNPFDLTKIWPHKDYPLIPVGKLVLNRNPVNYFAEVEQIAFDPSNMPPGIEPSPDKMLQGRLFAYPDTHRHRLGPNYLQIPVNCPYRTRVANYQRDGPMCVTDNQGGAPNYYPNSFSAPVEQRQALEHTSRCSGDVGRYNSTDDDNVTQVRAFYTQVLNEEQRRRLCENIAGHLKDAQLFIQKKAVKNFMDVHPDYGNRIQTLLDKYNVEKPKNAIHTFVQDGSHLSAKEKANL</sequence>
<reference key="1">
    <citation type="submission" date="1998-04" db="EMBL/GenBank/DDBJ databases">
        <title>Molecular characterization of guinea pig catalase.</title>
        <authorList>
            <person name="Pinteric M."/>
            <person name="Baumgart E."/>
            <person name="Bulitta C."/>
            <person name="Fahimi D."/>
            <person name="Voelkl A."/>
        </authorList>
    </citation>
    <scope>NUCLEOTIDE SEQUENCE [MRNA]</scope>
</reference>
<reference key="2">
    <citation type="journal article" date="1996" name="Biochim. Biophys. Acta">
        <title>Differential patterns of antioxidant enzyme mRNA expression in guinea pig lung and liver during development.</title>
        <authorList>
            <person name="Yuan H.T."/>
            <person name="Bingle C.D."/>
            <person name="Kelly F.J."/>
        </authorList>
    </citation>
    <scope>NUCLEOTIDE SEQUENCE [MRNA] OF 1-138</scope>
    <source>
        <strain>Hartley</strain>
        <tissue>Lung</tissue>
    </source>
</reference>
<proteinExistence type="evidence at transcript level"/>
<protein>
    <recommendedName>
        <fullName>Catalase</fullName>
        <ecNumber evidence="3">1.11.1.6</ecNumber>
    </recommendedName>
</protein>
<keyword id="KW-0007">Acetylation</keyword>
<keyword id="KW-0349">Heme</keyword>
<keyword id="KW-0376">Hydrogen peroxide</keyword>
<keyword id="KW-0408">Iron</keyword>
<keyword id="KW-0479">Metal-binding</keyword>
<keyword id="KW-0497">Mitogen</keyword>
<keyword id="KW-0521">NADP</keyword>
<keyword id="KW-0560">Oxidoreductase</keyword>
<keyword id="KW-0575">Peroxidase</keyword>
<keyword id="KW-0576">Peroxisome</keyword>
<keyword id="KW-0597">Phosphoprotein</keyword>
<keyword id="KW-1185">Reference proteome</keyword>
<gene>
    <name type="primary">CAT</name>
</gene>
<evidence type="ECO:0000250" key="1">
    <source>
        <dbReference type="UniProtKB" id="P04040"/>
    </source>
</evidence>
<evidence type="ECO:0000250" key="2">
    <source>
        <dbReference type="UniProtKB" id="P24270"/>
    </source>
</evidence>
<evidence type="ECO:0000255" key="3">
    <source>
        <dbReference type="PROSITE-ProRule" id="PRU10013"/>
    </source>
</evidence>
<evidence type="ECO:0000256" key="4">
    <source>
        <dbReference type="SAM" id="MobiDB-lite"/>
    </source>
</evidence>
<evidence type="ECO:0000305" key="5"/>
<feature type="initiator methionine" description="Removed" evidence="1">
    <location>
        <position position="1"/>
    </location>
</feature>
<feature type="chain" id="PRO_0000084900" description="Catalase">
    <location>
        <begin position="2"/>
        <end position="527"/>
    </location>
</feature>
<feature type="region of interest" description="Disordered" evidence="4">
    <location>
        <begin position="1"/>
        <end position="32"/>
    </location>
</feature>
<feature type="short sequence motif" description="Microbody targeting signal; atypical" evidence="1">
    <location>
        <begin position="524"/>
        <end position="527"/>
    </location>
</feature>
<feature type="compositionally biased region" description="Basic and acidic residues" evidence="4">
    <location>
        <begin position="1"/>
        <end position="22"/>
    </location>
</feature>
<feature type="active site" evidence="3">
    <location>
        <position position="75"/>
    </location>
</feature>
<feature type="active site" evidence="3">
    <location>
        <position position="148"/>
    </location>
</feature>
<feature type="binding site" evidence="1">
    <location>
        <position position="194"/>
    </location>
    <ligand>
        <name>NADP(+)</name>
        <dbReference type="ChEBI" id="CHEBI:58349"/>
    </ligand>
</feature>
<feature type="binding site" evidence="1">
    <location>
        <position position="201"/>
    </location>
    <ligand>
        <name>NADP(+)</name>
        <dbReference type="ChEBI" id="CHEBI:58349"/>
    </ligand>
</feature>
<feature type="binding site" evidence="1">
    <location>
        <position position="203"/>
    </location>
    <ligand>
        <name>NADP(+)</name>
        <dbReference type="ChEBI" id="CHEBI:58349"/>
    </ligand>
</feature>
<feature type="binding site" evidence="1">
    <location>
        <position position="213"/>
    </location>
    <ligand>
        <name>NADP(+)</name>
        <dbReference type="ChEBI" id="CHEBI:58349"/>
    </ligand>
</feature>
<feature type="binding site" evidence="1">
    <location>
        <position position="237"/>
    </location>
    <ligand>
        <name>NADP(+)</name>
        <dbReference type="ChEBI" id="CHEBI:58349"/>
    </ligand>
</feature>
<feature type="binding site" evidence="1">
    <location>
        <position position="303"/>
    </location>
    <ligand>
        <name>NADP(+)</name>
        <dbReference type="ChEBI" id="CHEBI:58349"/>
    </ligand>
</feature>
<feature type="binding site" evidence="1">
    <location>
        <position position="305"/>
    </location>
    <ligand>
        <name>NADP(+)</name>
        <dbReference type="ChEBI" id="CHEBI:58349"/>
    </ligand>
</feature>
<feature type="binding site" evidence="1">
    <location>
        <position position="306"/>
    </location>
    <ligand>
        <name>NADP(+)</name>
        <dbReference type="ChEBI" id="CHEBI:58349"/>
    </ligand>
</feature>
<feature type="binding site" description="axial binding residue" evidence="1">
    <location>
        <position position="358"/>
    </location>
    <ligand>
        <name>heme</name>
        <dbReference type="ChEBI" id="CHEBI:30413"/>
    </ligand>
    <ligandPart>
        <name>Fe</name>
        <dbReference type="ChEBI" id="CHEBI:18248"/>
    </ligandPart>
</feature>
<feature type="modified residue" description="N-acetylalanine" evidence="1">
    <location>
        <position position="2"/>
    </location>
</feature>
<feature type="modified residue" description="Phosphoserine" evidence="1">
    <location>
        <position position="9"/>
    </location>
</feature>
<feature type="modified residue" description="N6-succinyllysine" evidence="2">
    <location>
        <position position="13"/>
    </location>
</feature>
<feature type="modified residue" description="N6-succinyllysine" evidence="2">
    <location>
        <position position="221"/>
    </location>
</feature>
<feature type="modified residue" description="N6-acetyllysine" evidence="2">
    <location>
        <position position="233"/>
    </location>
</feature>
<feature type="modified residue" description="N6-acetyllysine; alternate" evidence="2">
    <location>
        <position position="306"/>
    </location>
</feature>
<feature type="modified residue" description="N6-succinyllysine; alternate" evidence="2">
    <location>
        <position position="306"/>
    </location>
</feature>
<feature type="modified residue" description="Phosphoserine" evidence="2">
    <location>
        <position position="434"/>
    </location>
</feature>
<feature type="modified residue" description="N6-acetyllysine; alternate" evidence="2">
    <location>
        <position position="480"/>
    </location>
</feature>
<feature type="modified residue" description="N6-succinyllysine; alternate" evidence="2">
    <location>
        <position position="480"/>
    </location>
</feature>
<feature type="modified residue" description="N6-acetyllysine" evidence="2">
    <location>
        <position position="499"/>
    </location>
</feature>
<feature type="modified residue" description="Phosphothreonine" evidence="1">
    <location>
        <position position="511"/>
    </location>
</feature>
<feature type="modified residue" description="Phosphoserine" evidence="1">
    <location>
        <position position="517"/>
    </location>
</feature>
<feature type="modified residue" description="N6-succinyllysine" evidence="2">
    <location>
        <position position="522"/>
    </location>
</feature>
<feature type="sequence conflict" description="In Ref. 2; AAC52717." evidence="5" ref="2">
    <location>
        <position position="9"/>
    </location>
</feature>
<feature type="sequence conflict" description="In Ref. 2; AAC52717." evidence="5" ref="2">
    <original>A</original>
    <variation>G</variation>
    <location>
        <position position="83"/>
    </location>
</feature>
<accession>Q64405</accession>
<accession>Q9QZ51</accession>
<comment type="function">
    <text evidence="1">Catalyzes the degradation of hydrogen peroxide (H(2)O(2)) generated by peroxisomal oxidases to water and oxygen, thereby protecting cells from the toxic effects of hydrogen peroxide. Promotes growth of cells including T-cells, B-cells, myeloid leukemia cells, melanoma cells, mastocytoma cells and normal and transformed fibroblast cells.</text>
</comment>
<comment type="catalytic activity">
    <reaction evidence="3">
        <text>2 H2O2 = O2 + 2 H2O</text>
        <dbReference type="Rhea" id="RHEA:20309"/>
        <dbReference type="ChEBI" id="CHEBI:15377"/>
        <dbReference type="ChEBI" id="CHEBI:15379"/>
        <dbReference type="ChEBI" id="CHEBI:16240"/>
        <dbReference type="EC" id="1.11.1.6"/>
    </reaction>
</comment>
<comment type="cofactor">
    <cofactor evidence="1">
        <name>heme</name>
        <dbReference type="ChEBI" id="CHEBI:30413"/>
    </cofactor>
</comment>
<comment type="cofactor">
    <cofactor evidence="1">
        <name>NADP(+)</name>
        <dbReference type="ChEBI" id="CHEBI:58349"/>
    </cofactor>
</comment>
<comment type="subunit">
    <text evidence="1">Homotetramer. Interacts (via microbody targeting signal) with PEX5, monomeric form interacts with PEX5, leading to its translocation into peroxisomes.</text>
</comment>
<comment type="subcellular location">
    <subcellularLocation>
        <location evidence="1">Peroxisome matrix</location>
    </subcellularLocation>
</comment>
<comment type="similarity">
    <text evidence="5">Belongs to the catalase family.</text>
</comment>